<proteinExistence type="evidence at protein level"/>
<reference key="1">
    <citation type="journal article" date="2000" name="Nature">
        <title>Sequence and analysis of chromosome 3 of the plant Arabidopsis thaliana.</title>
        <authorList>
            <person name="Salanoubat M."/>
            <person name="Lemcke K."/>
            <person name="Rieger M."/>
            <person name="Ansorge W."/>
            <person name="Unseld M."/>
            <person name="Fartmann B."/>
            <person name="Valle G."/>
            <person name="Bloecker H."/>
            <person name="Perez-Alonso M."/>
            <person name="Obermaier B."/>
            <person name="Delseny M."/>
            <person name="Boutry M."/>
            <person name="Grivell L.A."/>
            <person name="Mache R."/>
            <person name="Puigdomenech P."/>
            <person name="De Simone V."/>
            <person name="Choisne N."/>
            <person name="Artiguenave F."/>
            <person name="Robert C."/>
            <person name="Brottier P."/>
            <person name="Wincker P."/>
            <person name="Cattolico L."/>
            <person name="Weissenbach J."/>
            <person name="Saurin W."/>
            <person name="Quetier F."/>
            <person name="Schaefer M."/>
            <person name="Mueller-Auer S."/>
            <person name="Gabel C."/>
            <person name="Fuchs M."/>
            <person name="Benes V."/>
            <person name="Wurmbach E."/>
            <person name="Drzonek H."/>
            <person name="Erfle H."/>
            <person name="Jordan N."/>
            <person name="Bangert S."/>
            <person name="Wiedelmann R."/>
            <person name="Kranz H."/>
            <person name="Voss H."/>
            <person name="Holland R."/>
            <person name="Brandt P."/>
            <person name="Nyakatura G."/>
            <person name="Vezzi A."/>
            <person name="D'Angelo M."/>
            <person name="Pallavicini A."/>
            <person name="Toppo S."/>
            <person name="Simionati B."/>
            <person name="Conrad A."/>
            <person name="Hornischer K."/>
            <person name="Kauer G."/>
            <person name="Loehnert T.-H."/>
            <person name="Nordsiek G."/>
            <person name="Reichelt J."/>
            <person name="Scharfe M."/>
            <person name="Schoen O."/>
            <person name="Bargues M."/>
            <person name="Terol J."/>
            <person name="Climent J."/>
            <person name="Navarro P."/>
            <person name="Collado C."/>
            <person name="Perez-Perez A."/>
            <person name="Ottenwaelder B."/>
            <person name="Duchemin D."/>
            <person name="Cooke R."/>
            <person name="Laudie M."/>
            <person name="Berger-Llauro C."/>
            <person name="Purnelle B."/>
            <person name="Masuy D."/>
            <person name="de Haan M."/>
            <person name="Maarse A.C."/>
            <person name="Alcaraz J.-P."/>
            <person name="Cottet A."/>
            <person name="Casacuberta E."/>
            <person name="Monfort A."/>
            <person name="Argiriou A."/>
            <person name="Flores M."/>
            <person name="Liguori R."/>
            <person name="Vitale D."/>
            <person name="Mannhaupt G."/>
            <person name="Haase D."/>
            <person name="Schoof H."/>
            <person name="Rudd S."/>
            <person name="Zaccaria P."/>
            <person name="Mewes H.-W."/>
            <person name="Mayer K.F.X."/>
            <person name="Kaul S."/>
            <person name="Town C.D."/>
            <person name="Koo H.L."/>
            <person name="Tallon L.J."/>
            <person name="Jenkins J."/>
            <person name="Rooney T."/>
            <person name="Rizzo M."/>
            <person name="Walts A."/>
            <person name="Utterback T."/>
            <person name="Fujii C.Y."/>
            <person name="Shea T.P."/>
            <person name="Creasy T.H."/>
            <person name="Haas B."/>
            <person name="Maiti R."/>
            <person name="Wu D."/>
            <person name="Peterson J."/>
            <person name="Van Aken S."/>
            <person name="Pai G."/>
            <person name="Militscher J."/>
            <person name="Sellers P."/>
            <person name="Gill J.E."/>
            <person name="Feldblyum T.V."/>
            <person name="Preuss D."/>
            <person name="Lin X."/>
            <person name="Nierman W.C."/>
            <person name="Salzberg S.L."/>
            <person name="White O."/>
            <person name="Venter J.C."/>
            <person name="Fraser C.M."/>
            <person name="Kaneko T."/>
            <person name="Nakamura Y."/>
            <person name="Sato S."/>
            <person name="Kato T."/>
            <person name="Asamizu E."/>
            <person name="Sasamoto S."/>
            <person name="Kimura T."/>
            <person name="Idesawa K."/>
            <person name="Kawashima K."/>
            <person name="Kishida Y."/>
            <person name="Kiyokawa C."/>
            <person name="Kohara M."/>
            <person name="Matsumoto M."/>
            <person name="Matsuno A."/>
            <person name="Muraki A."/>
            <person name="Nakayama S."/>
            <person name="Nakazaki N."/>
            <person name="Shinpo S."/>
            <person name="Takeuchi C."/>
            <person name="Wada T."/>
            <person name="Watanabe A."/>
            <person name="Yamada M."/>
            <person name="Yasuda M."/>
            <person name="Tabata S."/>
        </authorList>
    </citation>
    <scope>NUCLEOTIDE SEQUENCE [LARGE SCALE GENOMIC DNA]</scope>
    <source>
        <strain>cv. Columbia</strain>
    </source>
</reference>
<reference key="2">
    <citation type="journal article" date="2017" name="Plant J.">
        <title>Araport11: a complete reannotation of the Arabidopsis thaliana reference genome.</title>
        <authorList>
            <person name="Cheng C.Y."/>
            <person name="Krishnakumar V."/>
            <person name="Chan A.P."/>
            <person name="Thibaud-Nissen F."/>
            <person name="Schobel S."/>
            <person name="Town C.D."/>
        </authorList>
    </citation>
    <scope>GENOME REANNOTATION</scope>
    <source>
        <strain>cv. Columbia</strain>
    </source>
</reference>
<reference key="3">
    <citation type="journal article" date="2003" name="Science">
        <title>Empirical analysis of transcriptional activity in the Arabidopsis genome.</title>
        <authorList>
            <person name="Yamada K."/>
            <person name="Lim J."/>
            <person name="Dale J.M."/>
            <person name="Chen H."/>
            <person name="Shinn P."/>
            <person name="Palm C.J."/>
            <person name="Southwick A.M."/>
            <person name="Wu H.C."/>
            <person name="Kim C.J."/>
            <person name="Nguyen M."/>
            <person name="Pham P.K."/>
            <person name="Cheuk R.F."/>
            <person name="Karlin-Newmann G."/>
            <person name="Liu S.X."/>
            <person name="Lam B."/>
            <person name="Sakano H."/>
            <person name="Wu T."/>
            <person name="Yu G."/>
            <person name="Miranda M."/>
            <person name="Quach H.L."/>
            <person name="Tripp M."/>
            <person name="Chang C.H."/>
            <person name="Lee J.M."/>
            <person name="Toriumi M.J."/>
            <person name="Chan M.M."/>
            <person name="Tang C.C."/>
            <person name="Onodera C.S."/>
            <person name="Deng J.M."/>
            <person name="Akiyama K."/>
            <person name="Ansari Y."/>
            <person name="Arakawa T."/>
            <person name="Banh J."/>
            <person name="Banno F."/>
            <person name="Bowser L."/>
            <person name="Brooks S.Y."/>
            <person name="Carninci P."/>
            <person name="Chao Q."/>
            <person name="Choy N."/>
            <person name="Enju A."/>
            <person name="Goldsmith A.D."/>
            <person name="Gurjal M."/>
            <person name="Hansen N.F."/>
            <person name="Hayashizaki Y."/>
            <person name="Johnson-Hopson C."/>
            <person name="Hsuan V.W."/>
            <person name="Iida K."/>
            <person name="Karnes M."/>
            <person name="Khan S."/>
            <person name="Koesema E."/>
            <person name="Ishida J."/>
            <person name="Jiang P.X."/>
            <person name="Jones T."/>
            <person name="Kawai J."/>
            <person name="Kamiya A."/>
            <person name="Meyers C."/>
            <person name="Nakajima M."/>
            <person name="Narusaka M."/>
            <person name="Seki M."/>
            <person name="Sakurai T."/>
            <person name="Satou M."/>
            <person name="Tamse R."/>
            <person name="Vaysberg M."/>
            <person name="Wallender E.K."/>
            <person name="Wong C."/>
            <person name="Yamamura Y."/>
            <person name="Yuan S."/>
            <person name="Shinozaki K."/>
            <person name="Davis R.W."/>
            <person name="Theologis A."/>
            <person name="Ecker J.R."/>
        </authorList>
    </citation>
    <scope>NUCLEOTIDE SEQUENCE [LARGE SCALE MRNA]</scope>
    <source>
        <strain>cv. Columbia</strain>
    </source>
</reference>
<reference key="4">
    <citation type="journal article" date="2005" name="Proc. Natl. Acad. Sci. U.S.A.">
        <title>Dual targeting is the rule for organellar aminoacyl-tRNA synthetases in Arabidopsis thaliana.</title>
        <authorList>
            <person name="Duchene A.-M."/>
            <person name="Giritch A."/>
            <person name="Hoffmann B."/>
            <person name="Cognat V."/>
            <person name="Lancelin D."/>
            <person name="Peeters N.M."/>
            <person name="Zaepfel M."/>
            <person name="Marechal-Drouard L."/>
            <person name="Small I.D."/>
        </authorList>
    </citation>
    <scope>SUBCELLULAR LOCATION</scope>
</reference>
<reference key="5">
    <citation type="journal article" date="2007" name="J. Mol. Biol.">
        <title>How can organellar protein N-terminal sequences be dual targeting signals? In silico analysis and mutagenesis approach.</title>
        <authorList>
            <person name="Pujol C."/>
            <person name="Marechal-Drouard L."/>
            <person name="Duchene A.M."/>
        </authorList>
    </citation>
    <scope>SUBCELLULAR LOCATION</scope>
</reference>
<reference key="6">
    <citation type="journal article" date="2008" name="PLoS ONE">
        <title>Sorting signals, N-terminal modifications and abundance of the chloroplast proteome.</title>
        <authorList>
            <person name="Zybailov B."/>
            <person name="Rutschow H."/>
            <person name="Friso G."/>
            <person name="Rudella A."/>
            <person name="Emanuelsson O."/>
            <person name="Sun Q."/>
            <person name="van Wijk K.J."/>
        </authorList>
    </citation>
    <scope>IDENTIFICATION BY MASS SPECTROMETRY</scope>
    <scope>SUBCELLULAR LOCATION [LARGE SCALE ANALYSIS]</scope>
</reference>
<reference key="7">
    <citation type="journal article" date="2012" name="Mol. Cell. Proteomics">
        <title>Comparative large-scale characterisation of plant vs. mammal proteins reveals similar and idiosyncratic N-alpha acetylation features.</title>
        <authorList>
            <person name="Bienvenut W.V."/>
            <person name="Sumpton D."/>
            <person name="Martinez A."/>
            <person name="Lilla S."/>
            <person name="Espagne C."/>
            <person name="Meinnel T."/>
            <person name="Giglione C."/>
        </authorList>
    </citation>
    <scope>ACETYLATION [LARGE SCALE ANALYSIS] AT ALA-54</scope>
    <scope>CLEAVAGE OF TRANSIT PEPTIDE [LARGE SCALE ANALYSIS] AFTER SER-53</scope>
    <scope>IDENTIFICATION BY MASS SPECTROMETRY [LARGE SCALE ANALYSIS]</scope>
</reference>
<organism>
    <name type="scientific">Arabidopsis thaliana</name>
    <name type="common">Mouse-ear cress</name>
    <dbReference type="NCBI Taxonomy" id="3702"/>
    <lineage>
        <taxon>Eukaryota</taxon>
        <taxon>Viridiplantae</taxon>
        <taxon>Streptophyta</taxon>
        <taxon>Embryophyta</taxon>
        <taxon>Tracheophyta</taxon>
        <taxon>Spermatophyta</taxon>
        <taxon>Magnoliopsida</taxon>
        <taxon>eudicotyledons</taxon>
        <taxon>Gunneridae</taxon>
        <taxon>Pentapetalae</taxon>
        <taxon>rosids</taxon>
        <taxon>malvids</taxon>
        <taxon>Brassicales</taxon>
        <taxon>Brassicaceae</taxon>
        <taxon>Camelineae</taxon>
        <taxon>Arabidopsis</taxon>
    </lineage>
</organism>
<protein>
    <recommendedName>
        <fullName evidence="7">Phenylalanine--tRNA ligase, chloroplastic/mitochondrial</fullName>
        <ecNumber evidence="7">6.1.1.20</ecNumber>
    </recommendedName>
    <alternativeName>
        <fullName evidence="7">Phenylalanyl-tRNA synthetase</fullName>
        <shortName evidence="7">PheRS</shortName>
    </alternativeName>
</protein>
<comment type="function">
    <text evidence="1">Is responsible for the charging of tRNA(Phe) with phenylalanine in mitochondrial translation.</text>
</comment>
<comment type="catalytic activity">
    <reaction evidence="7">
        <text>tRNA(Phe) + L-phenylalanine + ATP = L-phenylalanyl-tRNA(Phe) + AMP + diphosphate + H(+)</text>
        <dbReference type="Rhea" id="RHEA:19413"/>
        <dbReference type="Rhea" id="RHEA-COMP:9668"/>
        <dbReference type="Rhea" id="RHEA-COMP:9699"/>
        <dbReference type="ChEBI" id="CHEBI:15378"/>
        <dbReference type="ChEBI" id="CHEBI:30616"/>
        <dbReference type="ChEBI" id="CHEBI:33019"/>
        <dbReference type="ChEBI" id="CHEBI:58095"/>
        <dbReference type="ChEBI" id="CHEBI:78442"/>
        <dbReference type="ChEBI" id="CHEBI:78531"/>
        <dbReference type="ChEBI" id="CHEBI:456215"/>
        <dbReference type="EC" id="6.1.1.20"/>
    </reaction>
</comment>
<comment type="subunit">
    <text evidence="1">Monomer.</text>
</comment>
<comment type="subcellular location">
    <subcellularLocation>
        <location evidence="4 5 6">Plastid</location>
        <location evidence="4 5 6">Chloroplast stroma</location>
    </subcellularLocation>
    <subcellularLocation>
        <location evidence="4 5 6">Mitochondrion matrix</location>
    </subcellularLocation>
</comment>
<comment type="similarity">
    <text evidence="7">Belongs to the class-II aminoacyl-tRNA synthetase family.</text>
</comment>
<accession>Q94K73</accession>
<accession>Q9M2K2</accession>
<keyword id="KW-0007">Acetylation</keyword>
<keyword id="KW-0030">Aminoacyl-tRNA synthetase</keyword>
<keyword id="KW-0067">ATP-binding</keyword>
<keyword id="KW-0150">Chloroplast</keyword>
<keyword id="KW-0436">Ligase</keyword>
<keyword id="KW-0496">Mitochondrion</keyword>
<keyword id="KW-0547">Nucleotide-binding</keyword>
<keyword id="KW-0934">Plastid</keyword>
<keyword id="KW-0648">Protein biosynthesis</keyword>
<keyword id="KW-1185">Reference proteome</keyword>
<keyword id="KW-0809">Transit peptide</keyword>
<name>SYFM_ARATH</name>
<feature type="transit peptide" description="Chloroplast and mitochondrion" evidence="2 8">
    <location>
        <begin position="1"/>
        <end position="53"/>
    </location>
</feature>
<feature type="chain" id="PRO_0000390362" description="Phenylalanine--tRNA ligase, chloroplastic/mitochondrial" evidence="7">
    <location>
        <begin position="54"/>
        <end position="429"/>
    </location>
</feature>
<feature type="domain" description="FDX-ACB" evidence="3">
    <location>
        <begin position="338"/>
        <end position="429"/>
    </location>
</feature>
<feature type="binding site" evidence="1">
    <location>
        <begin position="163"/>
        <end position="166"/>
    </location>
    <ligand>
        <name>substrate</name>
    </ligand>
</feature>
<feature type="binding site" evidence="1">
    <location>
        <position position="185"/>
    </location>
    <ligand>
        <name>substrate</name>
    </ligand>
</feature>
<feature type="binding site" evidence="1">
    <location>
        <begin position="192"/>
        <end position="194"/>
    </location>
    <ligand>
        <name>substrate</name>
    </ligand>
</feature>
<feature type="binding site" evidence="1">
    <location>
        <begin position="199"/>
        <end position="201"/>
    </location>
    <ligand>
        <name>substrate</name>
    </ligand>
</feature>
<feature type="binding site" evidence="1">
    <location>
        <position position="269"/>
    </location>
    <ligand>
        <name>substrate</name>
    </ligand>
</feature>
<feature type="binding site" evidence="1">
    <location>
        <position position="294"/>
    </location>
    <ligand>
        <name>substrate</name>
    </ligand>
</feature>
<feature type="modified residue" description="N-acetylalanine" evidence="8">
    <location>
        <position position="54"/>
    </location>
</feature>
<evidence type="ECO:0000250" key="1"/>
<evidence type="ECO:0000255" key="2"/>
<evidence type="ECO:0000255" key="3">
    <source>
        <dbReference type="PROSITE-ProRule" id="PRU00778"/>
    </source>
</evidence>
<evidence type="ECO:0000269" key="4">
    <source>
    </source>
</evidence>
<evidence type="ECO:0000269" key="5">
    <source>
    </source>
</evidence>
<evidence type="ECO:0000269" key="6">
    <source>
    </source>
</evidence>
<evidence type="ECO:0000305" key="7"/>
<evidence type="ECO:0007744" key="8">
    <source>
    </source>
</evidence>
<sequence length="429" mass="49252">MTVFSVQSTIFSRASVALLSSNGFKRFSFVSSFSSSAAYSPPKMRKRRYPIVSAVDIGGVAIARNDVVREDDPTNNVPDSIFSKLGMQLHRRDKHPIGILKNAIYDYFDSNYSNKFEKFEDLSPIVTTKQNFDDVLVPADHVSRSLNDTYYVDSQTVLRCHTSAHQAELLRKGHSRFLVTGDVYRRDSIDSTHYPVFHQMEGFCVFSPEDWNGSGKDSTLYAAEDLKKCLEGLARHLFGSVEMRWVDTYFPFTNPSFELEIYFKEDWLEVLGCGVTEQVILKQSGLENNVAWAFGLGLERLAMVLFDIPDIRFFWSSDERFTSQFGKGELGVKFKPYSKYPPCYKDISFWISDLFTENNFCEVVRGIAGDLVEEVKLIDQFTNKKKGLTSHCYRIVFRSMERSLTDEEVNDLQSKVRDEVQKKLNVELR</sequence>
<dbReference type="EC" id="6.1.1.20" evidence="7"/>
<dbReference type="EMBL" id="AL137081">
    <property type="protein sequence ID" value="CAB68152.1"/>
    <property type="molecule type" value="Genomic_DNA"/>
</dbReference>
<dbReference type="EMBL" id="CP002686">
    <property type="protein sequence ID" value="AEE79747.1"/>
    <property type="molecule type" value="Genomic_DNA"/>
</dbReference>
<dbReference type="EMBL" id="AF370247">
    <property type="protein sequence ID" value="AAK44062.1"/>
    <property type="molecule type" value="mRNA"/>
</dbReference>
<dbReference type="EMBL" id="AY063063">
    <property type="protein sequence ID" value="AAL34237.1"/>
    <property type="molecule type" value="mRNA"/>
</dbReference>
<dbReference type="PIR" id="T45974">
    <property type="entry name" value="T45974"/>
</dbReference>
<dbReference type="RefSeq" id="NP_567061.1">
    <property type="nucleotide sequence ID" value="NM_115676.2"/>
</dbReference>
<dbReference type="SMR" id="Q94K73"/>
<dbReference type="BioGRID" id="10298">
    <property type="interactions" value="1"/>
</dbReference>
<dbReference type="FunCoup" id="Q94K73">
    <property type="interactions" value="3562"/>
</dbReference>
<dbReference type="STRING" id="3702.Q94K73"/>
<dbReference type="iPTMnet" id="Q94K73"/>
<dbReference type="PaxDb" id="3702-AT3G58140.1"/>
<dbReference type="ProteomicsDB" id="228479"/>
<dbReference type="EnsemblPlants" id="AT3G58140.1">
    <property type="protein sequence ID" value="AT3G58140.1"/>
    <property type="gene ID" value="AT3G58140"/>
</dbReference>
<dbReference type="GeneID" id="824983"/>
<dbReference type="Gramene" id="AT3G58140.1">
    <property type="protein sequence ID" value="AT3G58140.1"/>
    <property type="gene ID" value="AT3G58140"/>
</dbReference>
<dbReference type="KEGG" id="ath:AT3G58140"/>
<dbReference type="Araport" id="AT3G58140"/>
<dbReference type="TAIR" id="AT3G58140"/>
<dbReference type="eggNOG" id="KOG2783">
    <property type="taxonomic scope" value="Eukaryota"/>
</dbReference>
<dbReference type="HOGENOM" id="CLU_022696_1_0_1"/>
<dbReference type="InParanoid" id="Q94K73"/>
<dbReference type="OMA" id="PISHYPQ"/>
<dbReference type="PhylomeDB" id="Q94K73"/>
<dbReference type="PRO" id="PR:Q94K73"/>
<dbReference type="Proteomes" id="UP000006548">
    <property type="component" value="Chromosome 3"/>
</dbReference>
<dbReference type="ExpressionAtlas" id="Q94K73">
    <property type="expression patterns" value="baseline and differential"/>
</dbReference>
<dbReference type="GO" id="GO:0009507">
    <property type="term" value="C:chloroplast"/>
    <property type="evidence" value="ECO:0000314"/>
    <property type="project" value="TAIR"/>
</dbReference>
<dbReference type="GO" id="GO:0009570">
    <property type="term" value="C:chloroplast stroma"/>
    <property type="evidence" value="ECO:0007005"/>
    <property type="project" value="TAIR"/>
</dbReference>
<dbReference type="GO" id="GO:0005829">
    <property type="term" value="C:cytosol"/>
    <property type="evidence" value="ECO:0007005"/>
    <property type="project" value="TAIR"/>
</dbReference>
<dbReference type="GO" id="GO:0005759">
    <property type="term" value="C:mitochondrial matrix"/>
    <property type="evidence" value="ECO:0007669"/>
    <property type="project" value="UniProtKB-SubCell"/>
</dbReference>
<dbReference type="GO" id="GO:0005739">
    <property type="term" value="C:mitochondrion"/>
    <property type="evidence" value="ECO:0000314"/>
    <property type="project" value="TAIR"/>
</dbReference>
<dbReference type="GO" id="GO:0005524">
    <property type="term" value="F:ATP binding"/>
    <property type="evidence" value="ECO:0007669"/>
    <property type="project" value="UniProtKB-KW"/>
</dbReference>
<dbReference type="GO" id="GO:0004826">
    <property type="term" value="F:phenylalanine-tRNA ligase activity"/>
    <property type="evidence" value="ECO:0007669"/>
    <property type="project" value="UniProtKB-EC"/>
</dbReference>
<dbReference type="GO" id="GO:0000049">
    <property type="term" value="F:tRNA binding"/>
    <property type="evidence" value="ECO:0007669"/>
    <property type="project" value="InterPro"/>
</dbReference>
<dbReference type="GO" id="GO:0006432">
    <property type="term" value="P:phenylalanyl-tRNA aminoacylation"/>
    <property type="evidence" value="ECO:0007669"/>
    <property type="project" value="InterPro"/>
</dbReference>
<dbReference type="CDD" id="cd00496">
    <property type="entry name" value="PheRS_alpha_core"/>
    <property type="match status" value="1"/>
</dbReference>
<dbReference type="FunFam" id="3.30.70.380:FF:000003">
    <property type="entry name" value="Phenylalanine--tRNA ligase chloroplastic/mitochondrial"/>
    <property type="match status" value="1"/>
</dbReference>
<dbReference type="FunFam" id="3.30.930.10:FF:000082">
    <property type="entry name" value="Phenylalanine--tRNA ligase chloroplastic/mitochondrial"/>
    <property type="match status" value="1"/>
</dbReference>
<dbReference type="FunFam" id="3.30.930.10:FF:000080">
    <property type="entry name" value="phenylalanine--tRNA ligase, chloroplastic/mitochondrial"/>
    <property type="match status" value="1"/>
</dbReference>
<dbReference type="Gene3D" id="3.30.930.10">
    <property type="entry name" value="Bira Bifunctional Protein, Domain 2"/>
    <property type="match status" value="2"/>
</dbReference>
<dbReference type="Gene3D" id="3.30.70.380">
    <property type="entry name" value="Ferrodoxin-fold anticodon-binding domain"/>
    <property type="match status" value="1"/>
</dbReference>
<dbReference type="InterPro" id="IPR006195">
    <property type="entry name" value="aa-tRNA-synth_II"/>
</dbReference>
<dbReference type="InterPro" id="IPR045864">
    <property type="entry name" value="aa-tRNA-synth_II/BPL/LPL"/>
</dbReference>
<dbReference type="InterPro" id="IPR005121">
    <property type="entry name" value="Fdx_antiC-bd"/>
</dbReference>
<dbReference type="InterPro" id="IPR036690">
    <property type="entry name" value="Fdx_antiC-bd_sf"/>
</dbReference>
<dbReference type="InterPro" id="IPR004530">
    <property type="entry name" value="Phe-tRNA-synth_IIc_mito"/>
</dbReference>
<dbReference type="InterPro" id="IPR002319">
    <property type="entry name" value="Phenylalanyl-tRNA_Synthase"/>
</dbReference>
<dbReference type="NCBIfam" id="TIGR00469">
    <property type="entry name" value="pheS_mito"/>
    <property type="match status" value="1"/>
</dbReference>
<dbReference type="PANTHER" id="PTHR11538:SF41">
    <property type="entry name" value="PHENYLALANINE--TRNA LIGASE, MITOCHONDRIAL"/>
    <property type="match status" value="1"/>
</dbReference>
<dbReference type="PANTHER" id="PTHR11538">
    <property type="entry name" value="PHENYLALANYL-TRNA SYNTHETASE"/>
    <property type="match status" value="1"/>
</dbReference>
<dbReference type="Pfam" id="PF03147">
    <property type="entry name" value="FDX-ACB"/>
    <property type="match status" value="1"/>
</dbReference>
<dbReference type="Pfam" id="PF01409">
    <property type="entry name" value="tRNA-synt_2d"/>
    <property type="match status" value="1"/>
</dbReference>
<dbReference type="SMART" id="SM00896">
    <property type="entry name" value="FDX-ACB"/>
    <property type="match status" value="1"/>
</dbReference>
<dbReference type="SUPFAM" id="SSF54991">
    <property type="entry name" value="Anticodon-binding domain of PheRS"/>
    <property type="match status" value="1"/>
</dbReference>
<dbReference type="SUPFAM" id="SSF55681">
    <property type="entry name" value="Class II aaRS and biotin synthetases"/>
    <property type="match status" value="1"/>
</dbReference>
<dbReference type="PROSITE" id="PS50862">
    <property type="entry name" value="AA_TRNA_LIGASE_II"/>
    <property type="match status" value="1"/>
</dbReference>
<dbReference type="PROSITE" id="PS51447">
    <property type="entry name" value="FDX_ACB"/>
    <property type="match status" value="1"/>
</dbReference>
<gene>
    <name type="ordered locus">At3g58140</name>
    <name type="ORF">F9D24.50</name>
</gene>